<feature type="chain" id="PRO_0000104554" description="Serpentine receptor class gamma-4">
    <location>
        <begin position="1"/>
        <end position="316"/>
    </location>
</feature>
<feature type="transmembrane region" description="Helical" evidence="1">
    <location>
        <begin position="21"/>
        <end position="41"/>
    </location>
</feature>
<feature type="transmembrane region" description="Helical" evidence="1">
    <location>
        <begin position="50"/>
        <end position="70"/>
    </location>
</feature>
<feature type="transmembrane region" description="Helical" evidence="1">
    <location>
        <begin position="99"/>
        <end position="121"/>
    </location>
</feature>
<feature type="transmembrane region" description="Helical" evidence="1">
    <location>
        <begin position="140"/>
        <end position="160"/>
    </location>
</feature>
<feature type="transmembrane region" description="Helical" evidence="1">
    <location>
        <begin position="188"/>
        <end position="208"/>
    </location>
</feature>
<feature type="transmembrane region" description="Helical" evidence="1">
    <location>
        <begin position="229"/>
        <end position="249"/>
    </location>
</feature>
<feature type="transmembrane region" description="Helical" evidence="1">
    <location>
        <begin position="258"/>
        <end position="278"/>
    </location>
</feature>
<proteinExistence type="inferred from homology"/>
<gene>
    <name type="primary">srg-4</name>
    <name type="ORF">T12A2.12</name>
</gene>
<comment type="subcellular location">
    <subcellularLocation>
        <location evidence="2">Membrane</location>
        <topology evidence="2">Multi-pass membrane protein</topology>
    </subcellularLocation>
</comment>
<comment type="similarity">
    <text evidence="2">Belongs to the nematode receptor-like protein srg family.</text>
</comment>
<dbReference type="EMBL" id="FO080619">
    <property type="protein sequence ID" value="CCD65217.1"/>
    <property type="molecule type" value="Genomic_DNA"/>
</dbReference>
<dbReference type="PIR" id="T15557">
    <property type="entry name" value="T15557"/>
</dbReference>
<dbReference type="RefSeq" id="NP_001293632.1">
    <property type="nucleotide sequence ID" value="NM_001306703.3"/>
</dbReference>
<dbReference type="SMR" id="P54126"/>
<dbReference type="PaxDb" id="6239-T12A2.12"/>
<dbReference type="EnsemblMetazoa" id="T12A2.12.1">
    <property type="protein sequence ID" value="T12A2.12.1"/>
    <property type="gene ID" value="WBGene00005162"/>
</dbReference>
<dbReference type="GeneID" id="24104888"/>
<dbReference type="KEGG" id="cel:CELE_T12A2.12"/>
<dbReference type="UCSC" id="T12A2.12">
    <property type="organism name" value="c. elegans"/>
</dbReference>
<dbReference type="AGR" id="WB:WBGene00005162"/>
<dbReference type="CTD" id="24104888"/>
<dbReference type="WormBase" id="T12A2.12">
    <property type="protein sequence ID" value="CE33181"/>
    <property type="gene ID" value="WBGene00005162"/>
    <property type="gene designation" value="srg-4"/>
</dbReference>
<dbReference type="eggNOG" id="ENOG502TH4T">
    <property type="taxonomic scope" value="Eukaryota"/>
</dbReference>
<dbReference type="GeneTree" id="ENSGT00970000195841"/>
<dbReference type="HOGENOM" id="CLU_061253_1_0_1"/>
<dbReference type="InParanoid" id="P54126"/>
<dbReference type="OMA" id="RIHIYFP"/>
<dbReference type="OrthoDB" id="5843999at2759"/>
<dbReference type="PhylomeDB" id="P54126"/>
<dbReference type="PRO" id="PR:P54126"/>
<dbReference type="Proteomes" id="UP000001940">
    <property type="component" value="Chromosome III"/>
</dbReference>
<dbReference type="GO" id="GO:0016020">
    <property type="term" value="C:membrane"/>
    <property type="evidence" value="ECO:0007669"/>
    <property type="project" value="UniProtKB-SubCell"/>
</dbReference>
<dbReference type="GO" id="GO:0004888">
    <property type="term" value="F:transmembrane signaling receptor activity"/>
    <property type="evidence" value="ECO:0007669"/>
    <property type="project" value="InterPro"/>
</dbReference>
<dbReference type="GO" id="GO:0007606">
    <property type="term" value="P:sensory perception of chemical stimulus"/>
    <property type="evidence" value="ECO:0007669"/>
    <property type="project" value="InterPro"/>
</dbReference>
<dbReference type="InterPro" id="IPR000609">
    <property type="entry name" value="7TM_GPCR_serpentine_rcpt_Srg"/>
</dbReference>
<dbReference type="InterPro" id="IPR051119">
    <property type="entry name" value="Nematode_SR-like"/>
</dbReference>
<dbReference type="PANTHER" id="PTHR31627:SF13">
    <property type="entry name" value="SERPENTINE RECEPTOR CLASS GAMMA-1-RELATED"/>
    <property type="match status" value="1"/>
</dbReference>
<dbReference type="PANTHER" id="PTHR31627">
    <property type="entry name" value="SERPENTINE RECEPTOR CLASS GAMMA-RELATED"/>
    <property type="match status" value="1"/>
</dbReference>
<dbReference type="Pfam" id="PF02118">
    <property type="entry name" value="Srg"/>
    <property type="match status" value="1"/>
</dbReference>
<dbReference type="PRINTS" id="PR00698">
    <property type="entry name" value="TMPROTEINSRG"/>
</dbReference>
<name>SRG4_CAEEL</name>
<keyword id="KW-0472">Membrane</keyword>
<keyword id="KW-1185">Reference proteome</keyword>
<keyword id="KW-0812">Transmembrane</keyword>
<keyword id="KW-1133">Transmembrane helix</keyword>
<evidence type="ECO:0000255" key="1"/>
<evidence type="ECO:0000305" key="2"/>
<accession>P54126</accession>
<accession>Q95ZP2</accession>
<reference key="1">
    <citation type="journal article" date="1998" name="Science">
        <title>Genome sequence of the nematode C. elegans: a platform for investigating biology.</title>
        <authorList>
            <consortium name="The C. elegans sequencing consortium"/>
        </authorList>
    </citation>
    <scope>NUCLEOTIDE SEQUENCE [LARGE SCALE GENOMIC DNA]</scope>
    <source>
        <strain>Bristol N2</strain>
    </source>
</reference>
<protein>
    <recommendedName>
        <fullName>Serpentine receptor class gamma-4</fullName>
        <shortName>Protein srg-4</shortName>
    </recommendedName>
</protein>
<sequence length="316" mass="36717">MSQCNSSYSVTRENLKYFAQFVYLVPGVLFQLRILIVIWGTHNKIYLKSSFFTIWSLDSLVSLVQMFLDVSFTRIHIYFPQLCEGFSVFLEIHWMIPNIVYPFYLYAFTAKSVIHSFLSINRASCVLMPTKYAYIWRSHMKKVIVFILLYPFLLLWNVIISEKYLDFIFGGFVISYIKRVPWASLSKFQIISYVFTFSVTLVTNSITLSKMAKLKKRLLMAERHLCVATAWISSGFVISLIAQAHFAFFRGDHELVEIFYIIQCVSFDLLNVGSPIVMITLSRELRNHVFLINPSPVVSRSTSTFNNKNNISILIQ</sequence>
<organism>
    <name type="scientific">Caenorhabditis elegans</name>
    <dbReference type="NCBI Taxonomy" id="6239"/>
    <lineage>
        <taxon>Eukaryota</taxon>
        <taxon>Metazoa</taxon>
        <taxon>Ecdysozoa</taxon>
        <taxon>Nematoda</taxon>
        <taxon>Chromadorea</taxon>
        <taxon>Rhabditida</taxon>
        <taxon>Rhabditina</taxon>
        <taxon>Rhabditomorpha</taxon>
        <taxon>Rhabditoidea</taxon>
        <taxon>Rhabditidae</taxon>
        <taxon>Peloderinae</taxon>
        <taxon>Caenorhabditis</taxon>
    </lineage>
</organism>